<dbReference type="EC" id="5.3.1.5" evidence="1"/>
<dbReference type="EMBL" id="CP000362">
    <property type="protein sequence ID" value="ABG33177.1"/>
    <property type="molecule type" value="Genomic_DNA"/>
</dbReference>
<dbReference type="RefSeq" id="WP_011569788.1">
    <property type="nucleotide sequence ID" value="NC_008209.1"/>
</dbReference>
<dbReference type="SMR" id="Q162B6"/>
<dbReference type="STRING" id="375451.RD1_3705"/>
<dbReference type="KEGG" id="rde:RD1_3705"/>
<dbReference type="eggNOG" id="COG2115">
    <property type="taxonomic scope" value="Bacteria"/>
</dbReference>
<dbReference type="HOGENOM" id="CLU_037261_1_0_5"/>
<dbReference type="OrthoDB" id="9763981at2"/>
<dbReference type="Proteomes" id="UP000007029">
    <property type="component" value="Chromosome"/>
</dbReference>
<dbReference type="GO" id="GO:0005737">
    <property type="term" value="C:cytoplasm"/>
    <property type="evidence" value="ECO:0007669"/>
    <property type="project" value="UniProtKB-SubCell"/>
</dbReference>
<dbReference type="GO" id="GO:0000287">
    <property type="term" value="F:magnesium ion binding"/>
    <property type="evidence" value="ECO:0007669"/>
    <property type="project" value="UniProtKB-UniRule"/>
</dbReference>
<dbReference type="GO" id="GO:0009045">
    <property type="term" value="F:xylose isomerase activity"/>
    <property type="evidence" value="ECO:0007669"/>
    <property type="project" value="UniProtKB-UniRule"/>
</dbReference>
<dbReference type="GO" id="GO:0042732">
    <property type="term" value="P:D-xylose metabolic process"/>
    <property type="evidence" value="ECO:0007669"/>
    <property type="project" value="UniProtKB-UniRule"/>
</dbReference>
<dbReference type="Gene3D" id="3.20.20.150">
    <property type="entry name" value="Divalent-metal-dependent TIM barrel enzymes"/>
    <property type="match status" value="1"/>
</dbReference>
<dbReference type="HAMAP" id="MF_00455">
    <property type="entry name" value="Xylose_isom_A"/>
    <property type="match status" value="1"/>
</dbReference>
<dbReference type="InterPro" id="IPR036237">
    <property type="entry name" value="Xyl_isomerase-like_sf"/>
</dbReference>
<dbReference type="InterPro" id="IPR013022">
    <property type="entry name" value="Xyl_isomerase-like_TIM-brl"/>
</dbReference>
<dbReference type="InterPro" id="IPR013452">
    <property type="entry name" value="Xylose_isom_bac"/>
</dbReference>
<dbReference type="InterPro" id="IPR001998">
    <property type="entry name" value="Xylose_isomerase"/>
</dbReference>
<dbReference type="NCBIfam" id="NF003998">
    <property type="entry name" value="PRK05474.1"/>
    <property type="match status" value="1"/>
</dbReference>
<dbReference type="NCBIfam" id="TIGR02630">
    <property type="entry name" value="xylose_isom_A"/>
    <property type="match status" value="1"/>
</dbReference>
<dbReference type="PANTHER" id="PTHR48408">
    <property type="match status" value="1"/>
</dbReference>
<dbReference type="PANTHER" id="PTHR48408:SF1">
    <property type="entry name" value="XYLOSE ISOMERASE"/>
    <property type="match status" value="1"/>
</dbReference>
<dbReference type="Pfam" id="PF01261">
    <property type="entry name" value="AP_endonuc_2"/>
    <property type="match status" value="1"/>
</dbReference>
<dbReference type="PRINTS" id="PR00688">
    <property type="entry name" value="XYLOSISMRASE"/>
</dbReference>
<dbReference type="SUPFAM" id="SSF51658">
    <property type="entry name" value="Xylose isomerase-like"/>
    <property type="match status" value="1"/>
</dbReference>
<dbReference type="PROSITE" id="PS51415">
    <property type="entry name" value="XYLOSE_ISOMERASE"/>
    <property type="match status" value="1"/>
</dbReference>
<evidence type="ECO:0000255" key="1">
    <source>
        <dbReference type="HAMAP-Rule" id="MF_00455"/>
    </source>
</evidence>
<reference key="1">
    <citation type="journal article" date="2007" name="J. Bacteriol.">
        <title>The complete genome sequence of Roseobacter denitrificans reveals a mixotrophic rather than photosynthetic metabolism.</title>
        <authorList>
            <person name="Swingley W.D."/>
            <person name="Sadekar S."/>
            <person name="Mastrian S.D."/>
            <person name="Matthies H.J."/>
            <person name="Hao J."/>
            <person name="Ramos H."/>
            <person name="Acharya C.R."/>
            <person name="Conrad A.L."/>
            <person name="Taylor H.L."/>
            <person name="Dejesa L.C."/>
            <person name="Shah M.K."/>
            <person name="O'Huallachain M.E."/>
            <person name="Lince M.T."/>
            <person name="Blankenship R.E."/>
            <person name="Beatty J.T."/>
            <person name="Touchman J.W."/>
        </authorList>
    </citation>
    <scope>NUCLEOTIDE SEQUENCE [LARGE SCALE GENOMIC DNA]</scope>
    <source>
        <strain>ATCC 33942 / OCh 114</strain>
    </source>
</reference>
<gene>
    <name evidence="1" type="primary">xylA</name>
    <name type="ordered locus">RD1_3705</name>
</gene>
<name>XYLA_ROSDO</name>
<sequence>MTDFFKDIPAIRYEGPDTENEFAFRHYNPDEVVMGKTLKDHLRFACAYWHSFAWPGGDPFGGQTFERPWFGDTMELAKLKADVAFDMFERLGVPYFCFHDADVRPEGDTFAESTKNLEEITDYFAEKMDATGVKLLWGTANLFSHRRFMAGAATNPDPEVFAYSAATIKSCMDATRKLGGENYVLWGGREGYETLLNTDMARERAQAGRMLQMVVDYKHKTGFAGTILIEPKPQEPTKHQYDYDVATVYGFLKDFGLEGEVKVNIEQGHAILAGHSFEHELALARALGIFGSIDMNRNDYQSGWDTDQFPNNVPEMALAYYEVLRAGGFDTGGTNFDAKLRRQSLDPADLILAHVGGMDACAAGLKAAAAMLEDGKLEAAREARYAGWSEGLGQKLLTSDLAEISDLVIAKGINPQPRSGRQERLENLVNKYL</sequence>
<accession>Q162B6</accession>
<keyword id="KW-0119">Carbohydrate metabolism</keyword>
<keyword id="KW-0963">Cytoplasm</keyword>
<keyword id="KW-0413">Isomerase</keyword>
<keyword id="KW-0460">Magnesium</keyword>
<keyword id="KW-0479">Metal-binding</keyword>
<keyword id="KW-1185">Reference proteome</keyword>
<keyword id="KW-0859">Xylose metabolism</keyword>
<proteinExistence type="inferred from homology"/>
<protein>
    <recommendedName>
        <fullName evidence="1">Xylose isomerase</fullName>
        <ecNumber evidence="1">5.3.1.5</ecNumber>
    </recommendedName>
</protein>
<feature type="chain" id="PRO_1000026454" description="Xylose isomerase">
    <location>
        <begin position="1"/>
        <end position="433"/>
    </location>
</feature>
<feature type="active site" evidence="1">
    <location>
        <position position="99"/>
    </location>
</feature>
<feature type="active site" evidence="1">
    <location>
        <position position="102"/>
    </location>
</feature>
<feature type="binding site" evidence="1">
    <location>
        <position position="230"/>
    </location>
    <ligand>
        <name>Mg(2+)</name>
        <dbReference type="ChEBI" id="CHEBI:18420"/>
        <label>1</label>
    </ligand>
</feature>
<feature type="binding site" evidence="1">
    <location>
        <position position="266"/>
    </location>
    <ligand>
        <name>Mg(2+)</name>
        <dbReference type="ChEBI" id="CHEBI:18420"/>
        <label>1</label>
    </ligand>
</feature>
<feature type="binding site" evidence="1">
    <location>
        <position position="266"/>
    </location>
    <ligand>
        <name>Mg(2+)</name>
        <dbReference type="ChEBI" id="CHEBI:18420"/>
        <label>2</label>
    </ligand>
</feature>
<feature type="binding site" evidence="1">
    <location>
        <position position="269"/>
    </location>
    <ligand>
        <name>Mg(2+)</name>
        <dbReference type="ChEBI" id="CHEBI:18420"/>
        <label>2</label>
    </ligand>
</feature>
<feature type="binding site" evidence="1">
    <location>
        <position position="294"/>
    </location>
    <ligand>
        <name>Mg(2+)</name>
        <dbReference type="ChEBI" id="CHEBI:18420"/>
        <label>1</label>
    </ligand>
</feature>
<feature type="binding site" evidence="1">
    <location>
        <position position="305"/>
    </location>
    <ligand>
        <name>Mg(2+)</name>
        <dbReference type="ChEBI" id="CHEBI:18420"/>
        <label>2</label>
    </ligand>
</feature>
<feature type="binding site" evidence="1">
    <location>
        <position position="307"/>
    </location>
    <ligand>
        <name>Mg(2+)</name>
        <dbReference type="ChEBI" id="CHEBI:18420"/>
        <label>2</label>
    </ligand>
</feature>
<feature type="binding site" evidence="1">
    <location>
        <position position="337"/>
    </location>
    <ligand>
        <name>Mg(2+)</name>
        <dbReference type="ChEBI" id="CHEBI:18420"/>
        <label>1</label>
    </ligand>
</feature>
<organism>
    <name type="scientific">Roseobacter denitrificans (strain ATCC 33942 / OCh 114)</name>
    <name type="common">Erythrobacter sp. (strain OCh 114)</name>
    <name type="synonym">Roseobacter denitrificans</name>
    <dbReference type="NCBI Taxonomy" id="375451"/>
    <lineage>
        <taxon>Bacteria</taxon>
        <taxon>Pseudomonadati</taxon>
        <taxon>Pseudomonadota</taxon>
        <taxon>Alphaproteobacteria</taxon>
        <taxon>Rhodobacterales</taxon>
        <taxon>Roseobacteraceae</taxon>
        <taxon>Roseobacter</taxon>
    </lineage>
</organism>
<comment type="catalytic activity">
    <reaction evidence="1">
        <text>alpha-D-xylose = alpha-D-xylulofuranose</text>
        <dbReference type="Rhea" id="RHEA:22816"/>
        <dbReference type="ChEBI" id="CHEBI:28518"/>
        <dbReference type="ChEBI" id="CHEBI:188998"/>
        <dbReference type="EC" id="5.3.1.5"/>
    </reaction>
</comment>
<comment type="cofactor">
    <cofactor evidence="1">
        <name>Mg(2+)</name>
        <dbReference type="ChEBI" id="CHEBI:18420"/>
    </cofactor>
    <text evidence="1">Binds 2 magnesium ions per subunit.</text>
</comment>
<comment type="subunit">
    <text evidence="1">Homotetramer.</text>
</comment>
<comment type="subcellular location">
    <subcellularLocation>
        <location evidence="1">Cytoplasm</location>
    </subcellularLocation>
</comment>
<comment type="similarity">
    <text evidence="1">Belongs to the xylose isomerase family.</text>
</comment>